<evidence type="ECO:0000250" key="1"/>
<evidence type="ECO:0000255" key="2"/>
<evidence type="ECO:0000269" key="3">
    <source>
    </source>
</evidence>
<evidence type="ECO:0000305" key="4"/>
<sequence>MSASVSATTAHHGLPAHEVVLLLESDPYHGLSDGEAAQRLERFGPNTLAVVTRASLLARILRQFHHPLIYVLLVAGTITAGLKEFVDAAVIFGVVVINAIVGFIQESKAEAALQGLRSMVHTHAKVVREGHEHTMPSEELVPGDLVLLAAGDKVPADLRLVRQTGLSVNESALTGESTPVHKDEVALPEGTPVADRRNIAYSGTLVTAGHGAGIVVATGAETELGEIHRLVGAAEVVATPLTAKLAWFSKFLTIAILGLAALTFGVGLLRRQDAVETFTAAIALAVGAIPEGLPTAVTITLAIGMARMAKRRAVIRRLPAVETLGSTTVICADKTGTLTENQMTVQSIWTPHGEIRATGTGYAPDVLLCDTDDAPVPVNANAALRWSLLAGACSNDAALVRDGTRWQIVGDPTEGAMLVVAAKAGFNPERLATTLPQVAAIPFSSERQYMATLHRDGTDHVVLAKGAVERMLDLCGTEMGADGALRPLDRATVLRATEMLTSRGLRVLATGMGAGAGTPDDFDENVIPGSLALTGLQAMSDPPRAAAASAVAACHSAGIAVKMITGDHAGTATAIATEVGLLDNTEPAAGSVLTGAELAALSADQYPEAVDTASVFARVSPEQKLRLVQALQARGHVVAMTGDGVNDAPALRQANIGVAMGRGGTEVAKDAADMVLTDDDFATIEAAVEEGRGVFDNLTKFITWTLPTNLGEGLVILAAIAVGVALPILPTQILWINMTTAIALGLMLAFEPKEAGIMTRPPRDPDQPLLTGWLVRRTLLVSTLLVASAWWLFAWELDNGAGLHEARTAALNLFVVVEAFYLFSCRSLTRSAWRLGMFANRWIILGVSAQAIAQFAITYLPAMNMVFDTAPIDIGVWVRIFAVATAITIVVATDTLLPRIRAQPP</sequence>
<keyword id="KW-0067">ATP-binding</keyword>
<keyword id="KW-1003">Cell membrane</keyword>
<keyword id="KW-0460">Magnesium</keyword>
<keyword id="KW-0472">Membrane</keyword>
<keyword id="KW-0479">Metal-binding</keyword>
<keyword id="KW-0547">Nucleotide-binding</keyword>
<keyword id="KW-0597">Phosphoprotein</keyword>
<keyword id="KW-1185">Reference proteome</keyword>
<keyword id="KW-1278">Translocase</keyword>
<keyword id="KW-0812">Transmembrane</keyword>
<keyword id="KW-1133">Transmembrane helix</keyword>
<gene>
    <name type="primary">ctpF</name>
    <name type="ordered locus">MT2053</name>
</gene>
<name>CTPF_MYCTO</name>
<protein>
    <recommendedName>
        <fullName>Probable cation-transporting ATPase F</fullName>
        <ecNumber>7.2.2.-</ecNumber>
    </recommendedName>
</protein>
<organism>
    <name type="scientific">Mycobacterium tuberculosis (strain CDC 1551 / Oshkosh)</name>
    <dbReference type="NCBI Taxonomy" id="83331"/>
    <lineage>
        <taxon>Bacteria</taxon>
        <taxon>Bacillati</taxon>
        <taxon>Actinomycetota</taxon>
        <taxon>Actinomycetes</taxon>
        <taxon>Mycobacteriales</taxon>
        <taxon>Mycobacteriaceae</taxon>
        <taxon>Mycobacterium</taxon>
        <taxon>Mycobacterium tuberculosis complex</taxon>
    </lineage>
</organism>
<reference key="1">
    <citation type="journal article" date="2002" name="J. Bacteriol.">
        <title>Whole-genome comparison of Mycobacterium tuberculosis clinical and laboratory strains.</title>
        <authorList>
            <person name="Fleischmann R.D."/>
            <person name="Alland D."/>
            <person name="Eisen J.A."/>
            <person name="Carpenter L."/>
            <person name="White O."/>
            <person name="Peterson J.D."/>
            <person name="DeBoy R.T."/>
            <person name="Dodson R.J."/>
            <person name="Gwinn M.L."/>
            <person name="Haft D.H."/>
            <person name="Hickey E.K."/>
            <person name="Kolonay J.F."/>
            <person name="Nelson W.C."/>
            <person name="Umayam L.A."/>
            <person name="Ermolaeva M.D."/>
            <person name="Salzberg S.L."/>
            <person name="Delcher A."/>
            <person name="Utterback T.R."/>
            <person name="Weidman J.F."/>
            <person name="Khouri H.M."/>
            <person name="Gill J."/>
            <person name="Mikula A."/>
            <person name="Bishai W."/>
            <person name="Jacobs W.R. Jr."/>
            <person name="Venter J.C."/>
            <person name="Fraser C.M."/>
        </authorList>
    </citation>
    <scope>NUCLEOTIDE SEQUENCE [LARGE SCALE GENOMIC DNA]</scope>
    <source>
        <strain>CDC 1551 / Oshkosh</strain>
    </source>
</reference>
<reference key="2">
    <citation type="journal article" date="2003" name="J. Exp. Med.">
        <title>Inhibition of respiration by nitric oxide induces a Mycobacterium tuberculosis dormancy program.</title>
        <authorList>
            <person name="Voskuil M.I."/>
            <person name="Schnappinger D."/>
            <person name="Visconti K.C."/>
            <person name="Harrell M.I."/>
            <person name="Dolganov G.M."/>
            <person name="Sherman D.R."/>
            <person name="Schoolnik G.K."/>
        </authorList>
    </citation>
    <scope>INDUCTION BY NITRIC OXIDE (NO) AND BY HYPOXIA</scope>
    <scope>DORMANCY REGULON</scope>
    <source>
        <strain>CDC 1551 / Oshkosh</strain>
    </source>
</reference>
<feature type="chain" id="PRO_0000426894" description="Probable cation-transporting ATPase F">
    <location>
        <begin position="1"/>
        <end position="905"/>
    </location>
</feature>
<feature type="transmembrane region" description="Helical" evidence="2">
    <location>
        <begin position="64"/>
        <end position="82"/>
    </location>
</feature>
<feature type="transmembrane region" description="Helical" evidence="2">
    <location>
        <begin position="88"/>
        <end position="104"/>
    </location>
</feature>
<feature type="transmembrane region" description="Helical" evidence="2">
    <location>
        <begin position="248"/>
        <end position="268"/>
    </location>
</feature>
<feature type="transmembrane region" description="Helical" evidence="2">
    <location>
        <begin position="281"/>
        <end position="301"/>
    </location>
</feature>
<feature type="transmembrane region" description="Helical" evidence="2">
    <location>
        <begin position="716"/>
        <end position="736"/>
    </location>
</feature>
<feature type="transmembrane region" description="Helical" evidence="2">
    <location>
        <begin position="738"/>
        <end position="758"/>
    </location>
</feature>
<feature type="transmembrane region" description="Helical" evidence="2">
    <location>
        <begin position="778"/>
        <end position="798"/>
    </location>
</feature>
<feature type="transmembrane region" description="Helical" evidence="2">
    <location>
        <begin position="808"/>
        <end position="828"/>
    </location>
</feature>
<feature type="transmembrane region" description="Helical" evidence="2">
    <location>
        <begin position="842"/>
        <end position="862"/>
    </location>
</feature>
<feature type="transmembrane region" description="Helical" evidence="2">
    <location>
        <begin position="872"/>
        <end position="892"/>
    </location>
</feature>
<feature type="active site" description="4-aspartylphosphate intermediate" evidence="1">
    <location>
        <position position="333"/>
    </location>
</feature>
<feature type="binding site" evidence="1">
    <location>
        <position position="643"/>
    </location>
    <ligand>
        <name>Mg(2+)</name>
        <dbReference type="ChEBI" id="CHEBI:18420"/>
    </ligand>
</feature>
<feature type="binding site" evidence="1">
    <location>
        <position position="647"/>
    </location>
    <ligand>
        <name>Mg(2+)</name>
        <dbReference type="ChEBI" id="CHEBI:18420"/>
    </ligand>
</feature>
<proteinExistence type="evidence at transcript level"/>
<accession>P9WPS8</accession>
<accession>L0TB76</accession>
<accession>P63687</accession>
<accession>Q10860</accession>
<accession>Q10861</accession>
<comment type="catalytic activity">
    <reaction>
        <text>ATP + H2O = ADP + phosphate + H(+)</text>
        <dbReference type="Rhea" id="RHEA:13065"/>
        <dbReference type="ChEBI" id="CHEBI:15377"/>
        <dbReference type="ChEBI" id="CHEBI:15378"/>
        <dbReference type="ChEBI" id="CHEBI:30616"/>
        <dbReference type="ChEBI" id="CHEBI:43474"/>
        <dbReference type="ChEBI" id="CHEBI:456216"/>
    </reaction>
</comment>
<comment type="subcellular location">
    <subcellularLocation>
        <location evidence="4">Cell membrane</location>
        <topology evidence="4">Multi-pass membrane protein</topology>
    </subcellularLocation>
</comment>
<comment type="induction">
    <text evidence="3">A member of the dormancy regulon. Induced in response to reduced oxygen tension (hypoxia) and low levels of nitric oxide (NO).</text>
</comment>
<comment type="similarity">
    <text evidence="4">Belongs to the cation transport ATPase (P-type) (TC 3.A.3) family. Type IIA subfamily.</text>
</comment>
<comment type="sequence caution" evidence="4">
    <conflict type="erroneous initiation">
        <sequence resource="EMBL-CDS" id="AAK46330"/>
    </conflict>
</comment>
<dbReference type="EC" id="7.2.2.-"/>
<dbReference type="EMBL" id="AE000516">
    <property type="protein sequence ID" value="AAK46330.1"/>
    <property type="status" value="ALT_INIT"/>
    <property type="molecule type" value="Genomic_DNA"/>
</dbReference>
<dbReference type="PIR" id="C70758">
    <property type="entry name" value="C70758"/>
</dbReference>
<dbReference type="RefSeq" id="WP_003410027.1">
    <property type="nucleotide sequence ID" value="NZ_KK341227.1"/>
</dbReference>
<dbReference type="SMR" id="P9WPS8"/>
<dbReference type="TCDB" id="3.A.3.2.53">
    <property type="family name" value="the p-type atpase (p-atpase) superfamily"/>
</dbReference>
<dbReference type="KEGG" id="mtc:MT2053"/>
<dbReference type="PATRIC" id="fig|83331.31.peg.2210"/>
<dbReference type="HOGENOM" id="CLU_002360_3_3_11"/>
<dbReference type="Proteomes" id="UP000001020">
    <property type="component" value="Chromosome"/>
</dbReference>
<dbReference type="GO" id="GO:0005886">
    <property type="term" value="C:plasma membrane"/>
    <property type="evidence" value="ECO:0007669"/>
    <property type="project" value="UniProtKB-SubCell"/>
</dbReference>
<dbReference type="GO" id="GO:0005524">
    <property type="term" value="F:ATP binding"/>
    <property type="evidence" value="ECO:0007669"/>
    <property type="project" value="UniProtKB-KW"/>
</dbReference>
<dbReference type="GO" id="GO:0016887">
    <property type="term" value="F:ATP hydrolysis activity"/>
    <property type="evidence" value="ECO:0007669"/>
    <property type="project" value="InterPro"/>
</dbReference>
<dbReference type="GO" id="GO:0046872">
    <property type="term" value="F:metal ion binding"/>
    <property type="evidence" value="ECO:0007669"/>
    <property type="project" value="UniProtKB-KW"/>
</dbReference>
<dbReference type="GO" id="GO:0005391">
    <property type="term" value="F:P-type sodium:potassium-exchanging transporter activity"/>
    <property type="evidence" value="ECO:0007669"/>
    <property type="project" value="TreeGrafter"/>
</dbReference>
<dbReference type="GO" id="GO:0030007">
    <property type="term" value="P:intracellular potassium ion homeostasis"/>
    <property type="evidence" value="ECO:0007669"/>
    <property type="project" value="TreeGrafter"/>
</dbReference>
<dbReference type="GO" id="GO:0006883">
    <property type="term" value="P:intracellular sodium ion homeostasis"/>
    <property type="evidence" value="ECO:0007669"/>
    <property type="project" value="TreeGrafter"/>
</dbReference>
<dbReference type="GO" id="GO:1990573">
    <property type="term" value="P:potassium ion import across plasma membrane"/>
    <property type="evidence" value="ECO:0007669"/>
    <property type="project" value="TreeGrafter"/>
</dbReference>
<dbReference type="GO" id="GO:1902600">
    <property type="term" value="P:proton transmembrane transport"/>
    <property type="evidence" value="ECO:0007669"/>
    <property type="project" value="TreeGrafter"/>
</dbReference>
<dbReference type="GO" id="GO:0036376">
    <property type="term" value="P:sodium ion export across plasma membrane"/>
    <property type="evidence" value="ECO:0007669"/>
    <property type="project" value="TreeGrafter"/>
</dbReference>
<dbReference type="CDD" id="cd02080">
    <property type="entry name" value="P-type_ATPase_cation"/>
    <property type="match status" value="1"/>
</dbReference>
<dbReference type="FunFam" id="2.70.150.10:FF:000016">
    <property type="entry name" value="Calcium-transporting P-type ATPase putative"/>
    <property type="match status" value="1"/>
</dbReference>
<dbReference type="FunFam" id="3.40.50.1000:FF:000028">
    <property type="entry name" value="Calcium-transporting P-type ATPase, putative"/>
    <property type="match status" value="1"/>
</dbReference>
<dbReference type="Gene3D" id="3.40.1110.10">
    <property type="entry name" value="Calcium-transporting ATPase, cytoplasmic domain N"/>
    <property type="match status" value="1"/>
</dbReference>
<dbReference type="Gene3D" id="2.70.150.10">
    <property type="entry name" value="Calcium-transporting ATPase, cytoplasmic transduction domain A"/>
    <property type="match status" value="1"/>
</dbReference>
<dbReference type="Gene3D" id="1.20.1110.10">
    <property type="entry name" value="Calcium-transporting ATPase, transmembrane domain"/>
    <property type="match status" value="1"/>
</dbReference>
<dbReference type="Gene3D" id="3.40.50.1000">
    <property type="entry name" value="HAD superfamily/HAD-like"/>
    <property type="match status" value="1"/>
</dbReference>
<dbReference type="InterPro" id="IPR006068">
    <property type="entry name" value="ATPase_P-typ_cation-transptr_C"/>
</dbReference>
<dbReference type="InterPro" id="IPR004014">
    <property type="entry name" value="ATPase_P-typ_cation-transptr_N"/>
</dbReference>
<dbReference type="InterPro" id="IPR023299">
    <property type="entry name" value="ATPase_P-typ_cyto_dom_N"/>
</dbReference>
<dbReference type="InterPro" id="IPR018303">
    <property type="entry name" value="ATPase_P-typ_P_site"/>
</dbReference>
<dbReference type="InterPro" id="IPR023298">
    <property type="entry name" value="ATPase_P-typ_TM_dom_sf"/>
</dbReference>
<dbReference type="InterPro" id="IPR008250">
    <property type="entry name" value="ATPase_P-typ_transduc_dom_A_sf"/>
</dbReference>
<dbReference type="InterPro" id="IPR050510">
    <property type="entry name" value="Cation_transp_ATPase_P-type"/>
</dbReference>
<dbReference type="InterPro" id="IPR036412">
    <property type="entry name" value="HAD-like_sf"/>
</dbReference>
<dbReference type="InterPro" id="IPR023214">
    <property type="entry name" value="HAD_sf"/>
</dbReference>
<dbReference type="InterPro" id="IPR001757">
    <property type="entry name" value="P_typ_ATPase"/>
</dbReference>
<dbReference type="InterPro" id="IPR044492">
    <property type="entry name" value="P_typ_ATPase_HD_dom"/>
</dbReference>
<dbReference type="NCBIfam" id="TIGR01494">
    <property type="entry name" value="ATPase_P-type"/>
    <property type="match status" value="3"/>
</dbReference>
<dbReference type="PANTHER" id="PTHR43294:SF21">
    <property type="entry name" value="CATION TRANSPORTING ATPASE"/>
    <property type="match status" value="1"/>
</dbReference>
<dbReference type="PANTHER" id="PTHR43294">
    <property type="entry name" value="SODIUM/POTASSIUM-TRANSPORTING ATPASE SUBUNIT ALPHA"/>
    <property type="match status" value="1"/>
</dbReference>
<dbReference type="Pfam" id="PF13246">
    <property type="entry name" value="Cation_ATPase"/>
    <property type="match status" value="1"/>
</dbReference>
<dbReference type="Pfam" id="PF00689">
    <property type="entry name" value="Cation_ATPase_C"/>
    <property type="match status" value="1"/>
</dbReference>
<dbReference type="Pfam" id="PF00690">
    <property type="entry name" value="Cation_ATPase_N"/>
    <property type="match status" value="1"/>
</dbReference>
<dbReference type="Pfam" id="PF00122">
    <property type="entry name" value="E1-E2_ATPase"/>
    <property type="match status" value="1"/>
</dbReference>
<dbReference type="Pfam" id="PF08282">
    <property type="entry name" value="Hydrolase_3"/>
    <property type="match status" value="1"/>
</dbReference>
<dbReference type="PRINTS" id="PR00119">
    <property type="entry name" value="CATATPASE"/>
</dbReference>
<dbReference type="PRINTS" id="PR00120">
    <property type="entry name" value="HATPASE"/>
</dbReference>
<dbReference type="SFLD" id="SFLDG00002">
    <property type="entry name" value="C1.7:_P-type_atpase_like"/>
    <property type="match status" value="1"/>
</dbReference>
<dbReference type="SFLD" id="SFLDF00027">
    <property type="entry name" value="p-type_atpase"/>
    <property type="match status" value="1"/>
</dbReference>
<dbReference type="SMART" id="SM00831">
    <property type="entry name" value="Cation_ATPase_N"/>
    <property type="match status" value="1"/>
</dbReference>
<dbReference type="SUPFAM" id="SSF81653">
    <property type="entry name" value="Calcium ATPase, transduction domain A"/>
    <property type="match status" value="1"/>
</dbReference>
<dbReference type="SUPFAM" id="SSF81665">
    <property type="entry name" value="Calcium ATPase, transmembrane domain M"/>
    <property type="match status" value="1"/>
</dbReference>
<dbReference type="SUPFAM" id="SSF56784">
    <property type="entry name" value="HAD-like"/>
    <property type="match status" value="1"/>
</dbReference>
<dbReference type="SUPFAM" id="SSF81660">
    <property type="entry name" value="Metal cation-transporting ATPase, ATP-binding domain N"/>
    <property type="match status" value="1"/>
</dbReference>
<dbReference type="PROSITE" id="PS00154">
    <property type="entry name" value="ATPASE_E1_E2"/>
    <property type="match status" value="1"/>
</dbReference>